<reference key="1">
    <citation type="journal article" date="2003" name="Proc. Natl. Acad. Sci. U.S.A.">
        <title>Complete genome sequence and analysis of Wolinella succinogenes.</title>
        <authorList>
            <person name="Baar C."/>
            <person name="Eppinger M."/>
            <person name="Raddatz G."/>
            <person name="Simon J."/>
            <person name="Lanz C."/>
            <person name="Klimmek O."/>
            <person name="Nandakumar R."/>
            <person name="Gross R."/>
            <person name="Rosinus A."/>
            <person name="Keller H."/>
            <person name="Jagtap P."/>
            <person name="Linke B."/>
            <person name="Meyer F."/>
            <person name="Lederer H."/>
            <person name="Schuster S.C."/>
        </authorList>
    </citation>
    <scope>NUCLEOTIDE SEQUENCE [LARGE SCALE GENOMIC DNA]</scope>
    <source>
        <strain>ATCC 29543 / DSM 1740 / CCUG 13145 / JCM 31913 / LMG 7466 / NCTC 11488 / FDC 602W</strain>
    </source>
</reference>
<proteinExistence type="inferred from homology"/>
<gene>
    <name evidence="1" type="primary">rpsC</name>
    <name type="ordered locus">WS1710</name>
</gene>
<keyword id="KW-1185">Reference proteome</keyword>
<keyword id="KW-0687">Ribonucleoprotein</keyword>
<keyword id="KW-0689">Ribosomal protein</keyword>
<keyword id="KW-0694">RNA-binding</keyword>
<keyword id="KW-0699">rRNA-binding</keyword>
<sequence>MGQKVNPIGLRLGINRNWASRWFPNYQTAPLNISEDHKIRKFLKKELYYAGVSEIIIERTAKKLRVTVVAARPGIIIGKKGADIEKLKEALKKIVDKEISINIKEVKRPQANAQLAAENVTMQLERRVAFRRAMKKVMQAAMKAGAKGIKIKVSGRLAGAEMARTEWYMEGRVPLHTLRAKIDYGFAEAMTTYGIIGAKVWIFKGEVLQKGIQPEKKEEAPARDKEGRGTRRRGRQ</sequence>
<dbReference type="EMBL" id="BX571661">
    <property type="protein sequence ID" value="CAE10736.1"/>
    <property type="molecule type" value="Genomic_DNA"/>
</dbReference>
<dbReference type="RefSeq" id="WP_011139520.1">
    <property type="nucleotide sequence ID" value="NC_005090.1"/>
</dbReference>
<dbReference type="SMR" id="Q7M8E0"/>
<dbReference type="STRING" id="273121.WS1710"/>
<dbReference type="KEGG" id="wsu:WS1710"/>
<dbReference type="eggNOG" id="COG0092">
    <property type="taxonomic scope" value="Bacteria"/>
</dbReference>
<dbReference type="HOGENOM" id="CLU_058591_0_2_7"/>
<dbReference type="Proteomes" id="UP000000422">
    <property type="component" value="Chromosome"/>
</dbReference>
<dbReference type="GO" id="GO:0022627">
    <property type="term" value="C:cytosolic small ribosomal subunit"/>
    <property type="evidence" value="ECO:0007669"/>
    <property type="project" value="TreeGrafter"/>
</dbReference>
<dbReference type="GO" id="GO:0003729">
    <property type="term" value="F:mRNA binding"/>
    <property type="evidence" value="ECO:0007669"/>
    <property type="project" value="UniProtKB-UniRule"/>
</dbReference>
<dbReference type="GO" id="GO:0019843">
    <property type="term" value="F:rRNA binding"/>
    <property type="evidence" value="ECO:0007669"/>
    <property type="project" value="UniProtKB-UniRule"/>
</dbReference>
<dbReference type="GO" id="GO:0003735">
    <property type="term" value="F:structural constituent of ribosome"/>
    <property type="evidence" value="ECO:0007669"/>
    <property type="project" value="InterPro"/>
</dbReference>
<dbReference type="GO" id="GO:0006412">
    <property type="term" value="P:translation"/>
    <property type="evidence" value="ECO:0007669"/>
    <property type="project" value="UniProtKB-UniRule"/>
</dbReference>
<dbReference type="CDD" id="cd02412">
    <property type="entry name" value="KH-II_30S_S3"/>
    <property type="match status" value="1"/>
</dbReference>
<dbReference type="FunFam" id="3.30.1140.32:FF:000006">
    <property type="entry name" value="30S ribosomal protein S3"/>
    <property type="match status" value="1"/>
</dbReference>
<dbReference type="FunFam" id="3.30.300.20:FF:000001">
    <property type="entry name" value="30S ribosomal protein S3"/>
    <property type="match status" value="1"/>
</dbReference>
<dbReference type="Gene3D" id="3.30.300.20">
    <property type="match status" value="1"/>
</dbReference>
<dbReference type="Gene3D" id="3.30.1140.32">
    <property type="entry name" value="Ribosomal protein S3, C-terminal domain"/>
    <property type="match status" value="1"/>
</dbReference>
<dbReference type="HAMAP" id="MF_01309_B">
    <property type="entry name" value="Ribosomal_uS3_B"/>
    <property type="match status" value="1"/>
</dbReference>
<dbReference type="InterPro" id="IPR004087">
    <property type="entry name" value="KH_dom"/>
</dbReference>
<dbReference type="InterPro" id="IPR015946">
    <property type="entry name" value="KH_dom-like_a/b"/>
</dbReference>
<dbReference type="InterPro" id="IPR004044">
    <property type="entry name" value="KH_dom_type_2"/>
</dbReference>
<dbReference type="InterPro" id="IPR009019">
    <property type="entry name" value="KH_sf_prok-type"/>
</dbReference>
<dbReference type="InterPro" id="IPR036419">
    <property type="entry name" value="Ribosomal_S3_C_sf"/>
</dbReference>
<dbReference type="InterPro" id="IPR005704">
    <property type="entry name" value="Ribosomal_uS3_bac-typ"/>
</dbReference>
<dbReference type="InterPro" id="IPR001351">
    <property type="entry name" value="Ribosomal_uS3_C"/>
</dbReference>
<dbReference type="InterPro" id="IPR018280">
    <property type="entry name" value="Ribosomal_uS3_CS"/>
</dbReference>
<dbReference type="NCBIfam" id="TIGR01009">
    <property type="entry name" value="rpsC_bact"/>
    <property type="match status" value="1"/>
</dbReference>
<dbReference type="PANTHER" id="PTHR11760">
    <property type="entry name" value="30S/40S RIBOSOMAL PROTEIN S3"/>
    <property type="match status" value="1"/>
</dbReference>
<dbReference type="PANTHER" id="PTHR11760:SF19">
    <property type="entry name" value="SMALL RIBOSOMAL SUBUNIT PROTEIN US3C"/>
    <property type="match status" value="1"/>
</dbReference>
<dbReference type="Pfam" id="PF07650">
    <property type="entry name" value="KH_2"/>
    <property type="match status" value="1"/>
</dbReference>
<dbReference type="Pfam" id="PF00189">
    <property type="entry name" value="Ribosomal_S3_C"/>
    <property type="match status" value="1"/>
</dbReference>
<dbReference type="SMART" id="SM00322">
    <property type="entry name" value="KH"/>
    <property type="match status" value="1"/>
</dbReference>
<dbReference type="SUPFAM" id="SSF54814">
    <property type="entry name" value="Prokaryotic type KH domain (KH-domain type II)"/>
    <property type="match status" value="1"/>
</dbReference>
<dbReference type="SUPFAM" id="SSF54821">
    <property type="entry name" value="Ribosomal protein S3 C-terminal domain"/>
    <property type="match status" value="1"/>
</dbReference>
<dbReference type="PROSITE" id="PS50823">
    <property type="entry name" value="KH_TYPE_2"/>
    <property type="match status" value="1"/>
</dbReference>
<dbReference type="PROSITE" id="PS00548">
    <property type="entry name" value="RIBOSOMAL_S3"/>
    <property type="match status" value="1"/>
</dbReference>
<accession>Q7M8E0</accession>
<protein>
    <recommendedName>
        <fullName evidence="1">Small ribosomal subunit protein uS3</fullName>
    </recommendedName>
    <alternativeName>
        <fullName evidence="3">30S ribosomal protein S3</fullName>
    </alternativeName>
</protein>
<feature type="chain" id="PRO_0000130236" description="Small ribosomal subunit protein uS3">
    <location>
        <begin position="1"/>
        <end position="236"/>
    </location>
</feature>
<feature type="domain" description="KH type-2" evidence="1">
    <location>
        <begin position="39"/>
        <end position="107"/>
    </location>
</feature>
<feature type="region of interest" description="Disordered" evidence="2">
    <location>
        <begin position="213"/>
        <end position="236"/>
    </location>
</feature>
<feature type="compositionally biased region" description="Basic and acidic residues" evidence="2">
    <location>
        <begin position="213"/>
        <end position="229"/>
    </location>
</feature>
<comment type="function">
    <text evidence="1">Binds the lower part of the 30S subunit head. Binds mRNA in the 70S ribosome, positioning it for translation.</text>
</comment>
<comment type="subunit">
    <text evidence="1">Part of the 30S ribosomal subunit. Forms a tight complex with proteins S10 and S14.</text>
</comment>
<comment type="similarity">
    <text evidence="1">Belongs to the universal ribosomal protein uS3 family.</text>
</comment>
<evidence type="ECO:0000255" key="1">
    <source>
        <dbReference type="HAMAP-Rule" id="MF_01309"/>
    </source>
</evidence>
<evidence type="ECO:0000256" key="2">
    <source>
        <dbReference type="SAM" id="MobiDB-lite"/>
    </source>
</evidence>
<evidence type="ECO:0000305" key="3"/>
<organism>
    <name type="scientific">Wolinella succinogenes (strain ATCC 29543 / DSM 1740 / CCUG 13145 / JCM 31913 / LMG 7466 / NCTC 11488 / FDC 602W)</name>
    <name type="common">Vibrio succinogenes</name>
    <dbReference type="NCBI Taxonomy" id="273121"/>
    <lineage>
        <taxon>Bacteria</taxon>
        <taxon>Pseudomonadati</taxon>
        <taxon>Campylobacterota</taxon>
        <taxon>Epsilonproteobacteria</taxon>
        <taxon>Campylobacterales</taxon>
        <taxon>Helicobacteraceae</taxon>
        <taxon>Wolinella</taxon>
    </lineage>
</organism>
<name>RS3_WOLSU</name>